<organism>
    <name type="scientific">Saccharomyces cerevisiae (strain ATCC 204508 / S288c)</name>
    <name type="common">Baker's yeast</name>
    <dbReference type="NCBI Taxonomy" id="559292"/>
    <lineage>
        <taxon>Eukaryota</taxon>
        <taxon>Fungi</taxon>
        <taxon>Dikarya</taxon>
        <taxon>Ascomycota</taxon>
        <taxon>Saccharomycotina</taxon>
        <taxon>Saccharomycetes</taxon>
        <taxon>Saccharomycetales</taxon>
        <taxon>Saccharomycetaceae</taxon>
        <taxon>Saccharomyces</taxon>
    </lineage>
</organism>
<protein>
    <recommendedName>
        <fullName>Signal peptidase complex subunit 2</fullName>
    </recommendedName>
    <alternativeName>
        <fullName>Microsomal signal peptidase subunit 2</fullName>
    </alternativeName>
</protein>
<sequence length="178" mass="20802">MSSAKPINVYSIPELNQALDEALPSVFARLNYERSYALLDAKLYIGYSIAVVAGLSFFLDKKFERDQIVTYQKLLVGAYFVLSLLFWYFSRFIEKGTVYVGKRRGTKEEIYVKTKFEKNEPLYLVELVQKKKGENSKKELKAKLEVNKVFNESGYLQNDAYFKWFSEQHNVLDTKKNE</sequence>
<reference key="1">
    <citation type="journal article" date="1997" name="Nature">
        <title>The nucleotide sequence of Saccharomyces cerevisiae chromosome XIII.</title>
        <authorList>
            <person name="Bowman S."/>
            <person name="Churcher C.M."/>
            <person name="Badcock K."/>
            <person name="Brown D."/>
            <person name="Chillingworth T."/>
            <person name="Connor R."/>
            <person name="Dedman K."/>
            <person name="Devlin K."/>
            <person name="Gentles S."/>
            <person name="Hamlin N."/>
            <person name="Hunt S."/>
            <person name="Jagels K."/>
            <person name="Lye G."/>
            <person name="Moule S."/>
            <person name="Odell C."/>
            <person name="Pearson D."/>
            <person name="Rajandream M.A."/>
            <person name="Rice P."/>
            <person name="Skelton J."/>
            <person name="Walsh S.V."/>
            <person name="Whitehead S."/>
            <person name="Barrell B.G."/>
        </authorList>
    </citation>
    <scope>NUCLEOTIDE SEQUENCE [LARGE SCALE GENOMIC DNA]</scope>
    <source>
        <strain>ATCC 204508 / S288c</strain>
    </source>
</reference>
<reference key="2">
    <citation type="journal article" date="2014" name="G3 (Bethesda)">
        <title>The reference genome sequence of Saccharomyces cerevisiae: Then and now.</title>
        <authorList>
            <person name="Engel S.R."/>
            <person name="Dietrich F.S."/>
            <person name="Fisk D.G."/>
            <person name="Binkley G."/>
            <person name="Balakrishnan R."/>
            <person name="Costanzo M.C."/>
            <person name="Dwight S.S."/>
            <person name="Hitz B.C."/>
            <person name="Karra K."/>
            <person name="Nash R.S."/>
            <person name="Weng S."/>
            <person name="Wong E.D."/>
            <person name="Lloyd P."/>
            <person name="Skrzypek M.S."/>
            <person name="Miyasato S.R."/>
            <person name="Simison M."/>
            <person name="Cherry J.M."/>
        </authorList>
    </citation>
    <scope>GENOME REANNOTATION</scope>
    <source>
        <strain>ATCC 204508 / S288c</strain>
    </source>
</reference>
<reference key="3">
    <citation type="journal article" date="2007" name="Genome Res.">
        <title>Approaching a complete repository of sequence-verified protein-encoding clones for Saccharomyces cerevisiae.</title>
        <authorList>
            <person name="Hu Y."/>
            <person name="Rolfs A."/>
            <person name="Bhullar B."/>
            <person name="Murthy T.V.S."/>
            <person name="Zhu C."/>
            <person name="Berger M.F."/>
            <person name="Camargo A.A."/>
            <person name="Kelley F."/>
            <person name="McCarron S."/>
            <person name="Jepson D."/>
            <person name="Richardson A."/>
            <person name="Raphael J."/>
            <person name="Moreira D."/>
            <person name="Taycher E."/>
            <person name="Zuo D."/>
            <person name="Mohr S."/>
            <person name="Kane M.F."/>
            <person name="Williamson J."/>
            <person name="Simpson A.J.G."/>
            <person name="Bulyk M.L."/>
            <person name="Harlow E."/>
            <person name="Marsischky G."/>
            <person name="Kolodner R.D."/>
            <person name="LaBaer J."/>
        </authorList>
    </citation>
    <scope>NUCLEOTIDE SEQUENCE [GENOMIC DNA]</scope>
    <source>
        <strain>ATCC 204508 / S288c</strain>
    </source>
</reference>
<reference key="4">
    <citation type="journal article" date="1996" name="J. Biol. Chem.">
        <title>Structurally related Spc1p and Spc2p of yeast signal peptidase complex are functionally distinct.</title>
        <authorList>
            <person name="Mullins C."/>
            <person name="Meyer H.A."/>
            <person name="Hartmann E."/>
            <person name="Green N."/>
            <person name="Fang H."/>
        </authorList>
    </citation>
    <scope>IDENTIFICATION IN THE SIGNAL PEPTIDASE COMPLEX</scope>
    <scope>FUNCTION</scope>
</reference>
<reference key="5">
    <citation type="journal article" date="1997" name="J. Biol. Chem.">
        <title>The yeast SPC22/23 homolog Spc3p is essential for signal peptidase activity.</title>
        <authorList>
            <person name="Meyer H.A."/>
            <person name="Hartmann E."/>
        </authorList>
    </citation>
    <scope>IDENTIFICATION IN THE SIGNAL PEPTIDASE COMPLEX</scope>
</reference>
<reference key="6">
    <citation type="journal article" date="2000" name="J. Biol. Chem.">
        <title>Interactions between Spc2p and other components of the endoplasmic reticulum translocation sites of the yeast Saccharomyces cerevisiae.</title>
        <authorList>
            <person name="Antonin W."/>
            <person name="Meyer H.A."/>
            <person name="Hartmann E."/>
        </authorList>
    </citation>
    <scope>FUNCTION</scope>
    <scope>INTERACTION WITH SBH1 AND SEB2</scope>
</reference>
<reference key="7">
    <citation type="journal article" date="2003" name="Nature">
        <title>Global analysis of protein localization in budding yeast.</title>
        <authorList>
            <person name="Huh W.-K."/>
            <person name="Falvo J.V."/>
            <person name="Gerke L.C."/>
            <person name="Carroll A.S."/>
            <person name="Howson R.W."/>
            <person name="Weissman J.S."/>
            <person name="O'Shea E.K."/>
        </authorList>
    </citation>
    <scope>SUBCELLULAR LOCATION [LARGE SCALE ANALYSIS]</scope>
</reference>
<reference key="8">
    <citation type="journal article" date="2003" name="Nature">
        <title>Global analysis of protein expression in yeast.</title>
        <authorList>
            <person name="Ghaemmaghami S."/>
            <person name="Huh W.-K."/>
            <person name="Bower K."/>
            <person name="Howson R.W."/>
            <person name="Belle A."/>
            <person name="Dephoure N."/>
            <person name="O'Shea E.K."/>
            <person name="Weissman J.S."/>
        </authorList>
    </citation>
    <scope>LEVEL OF PROTEIN EXPRESSION [LARGE SCALE ANALYSIS]</scope>
</reference>
<reference key="9">
    <citation type="journal article" date="2006" name="Proc. Natl. Acad. Sci. U.S.A.">
        <title>A global topology map of the Saccharomyces cerevisiae membrane proteome.</title>
        <authorList>
            <person name="Kim H."/>
            <person name="Melen K."/>
            <person name="Oesterberg M."/>
            <person name="von Heijne G."/>
        </authorList>
    </citation>
    <scope>TOPOLOGY [LARGE SCALE ANALYSIS]</scope>
    <source>
        <strain>ATCC 208353 / W303-1A</strain>
    </source>
</reference>
<feature type="chain" id="PRO_0000203253" description="Signal peptidase complex subunit 2">
    <location>
        <begin position="1"/>
        <end position="178"/>
    </location>
</feature>
<feature type="topological domain" description="Cytoplasmic" evidence="2">
    <location>
        <begin position="1"/>
        <end position="37"/>
    </location>
</feature>
<feature type="transmembrane region" description="Helical" evidence="2">
    <location>
        <begin position="38"/>
        <end position="58"/>
    </location>
</feature>
<feature type="topological domain" description="Lumenal" evidence="2">
    <location>
        <begin position="59"/>
        <end position="67"/>
    </location>
</feature>
<feature type="transmembrane region" description="Helical" evidence="2">
    <location>
        <begin position="68"/>
        <end position="88"/>
    </location>
</feature>
<feature type="topological domain" description="Cytoplasmic" evidence="2">
    <location>
        <begin position="89"/>
        <end position="178"/>
    </location>
</feature>
<keyword id="KW-0256">Endoplasmic reticulum</keyword>
<keyword id="KW-0472">Membrane</keyword>
<keyword id="KW-1185">Reference proteome</keyword>
<keyword id="KW-0812">Transmembrane</keyword>
<keyword id="KW-1133">Transmembrane helix</keyword>
<name>SPC2_YEAST</name>
<comment type="function">
    <text evidence="3 6">Component of the signal peptidase complex (SPC) which catalyzes the cleavage of N-terminal signal sequences from nascent proteins as they are translocated into the lumen of the endoplasmic reticulum (PubMed:10921929, PubMed:8910564). Enhances the enzymatic activity of SPC and facilitates the interactions between different components of the translocation site (PubMed:10921929, PubMed:8910564).</text>
</comment>
<comment type="subunit">
    <text evidence="1 3 6 7">Component of the signal peptidase complex (SPC) composed of a catalytic subunit SEC11 and three accessory subunits SPC1, SPC2 and SPC3 (PubMed:8910564, PubMed:9148931). The complex induces a local thinning of the ER membrane which is used to measure the length of the signal peptide (SP) h-region of protein substrates (By similarity). This ensures the selectivity of the complex towards h-regions shorter than 18-20 amino acids (By similarity). SPC associates with the translocon complex (PubMed:10921929). Interacts with SBH1 and SEB2/SBH2 (PubMed:10921929).</text>
</comment>
<comment type="interaction">
    <interactant intactId="EBI-27827">
        <id>Q04969</id>
    </interactant>
    <interactant intactId="EBI-16632">
        <id>P21825</id>
        <label>SEC62</label>
    </interactant>
    <organismsDiffer>false</organismsDiffer>
    <experiments>3</experiments>
</comment>
<comment type="interaction">
    <interactant intactId="EBI-27827">
        <id>Q04969</id>
    </interactant>
    <interactant intactId="EBI-17823">
        <id>P46965</id>
        <label>SPC1</label>
    </interactant>
    <organismsDiffer>false</organismsDiffer>
    <experiments>3</experiments>
</comment>
<comment type="subcellular location">
    <subcellularLocation>
        <location evidence="4">Endoplasmic reticulum membrane</location>
        <topology evidence="2">Multi-pass membrane protein</topology>
    </subcellularLocation>
</comment>
<comment type="miscellaneous">
    <text evidence="5">Present with 4890 molecules/cell in log phase SD medium.</text>
</comment>
<comment type="miscellaneous">
    <text>Important for signal peptidase activity and cell viability at high temperatures.</text>
</comment>
<comment type="similarity">
    <text evidence="8">Belongs to the SPCS2 family.</text>
</comment>
<accession>Q04969</accession>
<accession>D6VZB9</accession>
<gene>
    <name type="primary">SPC2</name>
    <name type="synonym">SPY1</name>
    <name type="ordered locus">YML055W</name>
    <name type="ORF">YM9958.07</name>
</gene>
<dbReference type="EMBL" id="Z46729">
    <property type="protein sequence ID" value="CAA86720.1"/>
    <property type="molecule type" value="Genomic_DNA"/>
</dbReference>
<dbReference type="EMBL" id="AY557966">
    <property type="protein sequence ID" value="AAS56292.1"/>
    <property type="molecule type" value="Genomic_DNA"/>
</dbReference>
<dbReference type="EMBL" id="BK006946">
    <property type="protein sequence ID" value="DAA09843.1"/>
    <property type="molecule type" value="Genomic_DNA"/>
</dbReference>
<dbReference type="PIR" id="S49805">
    <property type="entry name" value="S49805"/>
</dbReference>
<dbReference type="RefSeq" id="NP_013657.1">
    <property type="nucleotide sequence ID" value="NM_001182413.1"/>
</dbReference>
<dbReference type="SMR" id="Q04969"/>
<dbReference type="BioGRID" id="35112">
    <property type="interactions" value="130"/>
</dbReference>
<dbReference type="ComplexPortal" id="CPX-1835">
    <property type="entry name" value="Signal peptidase complex"/>
</dbReference>
<dbReference type="DIP" id="DIP-4540N"/>
<dbReference type="FunCoup" id="Q04969">
    <property type="interactions" value="120"/>
</dbReference>
<dbReference type="IntAct" id="Q04969">
    <property type="interactions" value="36"/>
</dbReference>
<dbReference type="MINT" id="Q04969"/>
<dbReference type="STRING" id="4932.YML055W"/>
<dbReference type="MEROPS" id="X45.001"/>
<dbReference type="PaxDb" id="4932-YML055W"/>
<dbReference type="PeptideAtlas" id="Q04969"/>
<dbReference type="TopDownProteomics" id="Q04969"/>
<dbReference type="DNASU" id="854949"/>
<dbReference type="EnsemblFungi" id="YML055W_mRNA">
    <property type="protein sequence ID" value="YML055W"/>
    <property type="gene ID" value="YML055W"/>
</dbReference>
<dbReference type="GeneID" id="854949"/>
<dbReference type="KEGG" id="sce:YML055W"/>
<dbReference type="AGR" id="SGD:S000004519"/>
<dbReference type="SGD" id="S000004519">
    <property type="gene designation" value="SPC2"/>
</dbReference>
<dbReference type="VEuPathDB" id="FungiDB:YML055W"/>
<dbReference type="eggNOG" id="ENOG502S2C7">
    <property type="taxonomic scope" value="Eukaryota"/>
</dbReference>
<dbReference type="GeneTree" id="ENSGT00440000038181"/>
<dbReference type="HOGENOM" id="CLU_131066_0_0_1"/>
<dbReference type="InParanoid" id="Q04969"/>
<dbReference type="OMA" id="TKYDPIY"/>
<dbReference type="OrthoDB" id="29558at2759"/>
<dbReference type="BioCyc" id="YEAST:G3O-32651-MONOMER"/>
<dbReference type="BioGRID-ORCS" id="854949">
    <property type="hits" value="0 hits in 10 CRISPR screens"/>
</dbReference>
<dbReference type="PRO" id="PR:Q04969"/>
<dbReference type="Proteomes" id="UP000002311">
    <property type="component" value="Chromosome XIII"/>
</dbReference>
<dbReference type="RNAct" id="Q04969">
    <property type="molecule type" value="protein"/>
</dbReference>
<dbReference type="GO" id="GO:0005783">
    <property type="term" value="C:endoplasmic reticulum"/>
    <property type="evidence" value="ECO:0007005"/>
    <property type="project" value="SGD"/>
</dbReference>
<dbReference type="GO" id="GO:0005789">
    <property type="term" value="C:endoplasmic reticulum membrane"/>
    <property type="evidence" value="ECO:0000303"/>
    <property type="project" value="ComplexPortal"/>
</dbReference>
<dbReference type="GO" id="GO:0005787">
    <property type="term" value="C:signal peptidase complex"/>
    <property type="evidence" value="ECO:0000314"/>
    <property type="project" value="SGD"/>
</dbReference>
<dbReference type="GO" id="GO:0120236">
    <property type="term" value="P:negative regulation of post-translational protein targeting to membrane, translocation"/>
    <property type="evidence" value="ECO:0000315"/>
    <property type="project" value="SGD"/>
</dbReference>
<dbReference type="GO" id="GO:0045047">
    <property type="term" value="P:protein targeting to ER"/>
    <property type="evidence" value="ECO:0000315"/>
    <property type="project" value="SGD"/>
</dbReference>
<dbReference type="GO" id="GO:0006465">
    <property type="term" value="P:signal peptide processing"/>
    <property type="evidence" value="ECO:0000315"/>
    <property type="project" value="SGD"/>
</dbReference>
<dbReference type="InterPro" id="IPR009582">
    <property type="entry name" value="Spc2/SPCS2"/>
</dbReference>
<dbReference type="PANTHER" id="PTHR13085">
    <property type="entry name" value="MICROSOMAL SIGNAL PEPTIDASE 25 KDA SUBUNIT"/>
    <property type="match status" value="1"/>
</dbReference>
<dbReference type="PANTHER" id="PTHR13085:SF0">
    <property type="entry name" value="SIGNAL PEPTIDASE COMPLEX SUBUNIT 2"/>
    <property type="match status" value="1"/>
</dbReference>
<dbReference type="Pfam" id="PF06703">
    <property type="entry name" value="SPC25"/>
    <property type="match status" value="1"/>
</dbReference>
<evidence type="ECO:0000250" key="1">
    <source>
        <dbReference type="UniProtKB" id="P67812"/>
    </source>
</evidence>
<evidence type="ECO:0000255" key="2"/>
<evidence type="ECO:0000269" key="3">
    <source>
    </source>
</evidence>
<evidence type="ECO:0000269" key="4">
    <source>
    </source>
</evidence>
<evidence type="ECO:0000269" key="5">
    <source>
    </source>
</evidence>
<evidence type="ECO:0000269" key="6">
    <source>
    </source>
</evidence>
<evidence type="ECO:0000269" key="7">
    <source>
    </source>
</evidence>
<evidence type="ECO:0000305" key="8"/>
<proteinExistence type="evidence at protein level"/>